<feature type="chain" id="PRO_0000369497" description="Non-structural protein 5">
    <location>
        <begin position="1"/>
        <end position="197"/>
    </location>
</feature>
<feature type="region of interest" description="Disordered" evidence="2">
    <location>
        <begin position="17"/>
        <end position="36"/>
    </location>
</feature>
<feature type="region of interest" description="Disordered" evidence="2">
    <location>
        <begin position="131"/>
        <end position="166"/>
    </location>
</feature>
<feature type="compositionally biased region" description="Low complexity" evidence="2">
    <location>
        <begin position="17"/>
        <end position="33"/>
    </location>
</feature>
<feature type="compositionally biased region" description="Acidic residues" evidence="2">
    <location>
        <begin position="152"/>
        <end position="165"/>
    </location>
</feature>
<feature type="binding site" evidence="1">
    <location>
        <position position="92"/>
    </location>
    <ligand>
        <name>Mg(2+)</name>
        <dbReference type="ChEBI" id="CHEBI:18420"/>
    </ligand>
</feature>
<feature type="modified residue" description="Phosphoserine; by host CK1" evidence="1">
    <location>
        <position position="67"/>
    </location>
</feature>
<feature type="modified residue" description="Phosphoserine; by host" evidence="1">
    <location>
        <position position="153"/>
    </location>
</feature>
<feature type="modified residue" description="Phosphoserine; by host" evidence="1">
    <location>
        <position position="155"/>
    </location>
</feature>
<feature type="modified residue" description="Phosphoserine; by host" evidence="1">
    <location>
        <position position="163"/>
    </location>
</feature>
<feature type="modified residue" description="Phosphoserine; by host" evidence="1">
    <location>
        <position position="165"/>
    </location>
</feature>
<proteinExistence type="inferred from homology"/>
<sequence>MSLSIDVTSLPSISSSIFKNESSSATSTLSGKSIGRSEQYISPDVEAFNKYMLSKSPEDIGPSDSASNDPLTSFSIRSNAVKTNADAGVSMDSSTQSRPSSNVGCDQLDFSLNKGINVSANLDSCISISTDHKKEKSKKDKSRKHYPRIEADSDSEDYVLDDSDSDDGKCKNCKYKKKYFALRMRMKQVAMQLIEDL</sequence>
<organismHost>
    <name type="scientific">Homo sapiens</name>
    <name type="common">Human</name>
    <dbReference type="NCBI Taxonomy" id="9606"/>
</organismHost>
<accession>B3SRY1</accession>
<comment type="function">
    <text evidence="1">Plays an essential role in the viral genome replication. Participates, together with NSP2, in the formation of viral factories (viroplasms), which are large inclusions in the host cytoplasm where replication intermediates are assembled and viral RNA replication takes place. Orchestrates the recruitment of viroplasmic proteins such as capsid proteins to these factories. Participates in the selective exclusion of host proteins from stress granules (SG) and P bodies (PB). Also participates in the sequestration of these remodeled organelles in viral factories.</text>
</comment>
<comment type="cofactor">
    <cofactor evidence="1">
        <name>Mg(2+)</name>
        <dbReference type="ChEBI" id="CHEBI:18420"/>
    </cofactor>
</comment>
<comment type="subunit">
    <text evidence="1">Homodimer. Interacts with VP1. Interacts with VP2. Interacts with NSP2; this interaction leads to up-regulation of NSP5 hyperphosphorylation and formation of virus factories. Interacts with NSP6. Participates in the selective exclusion of host proteins from stress granules (SG) and P bodies (PB). Also participates in the sequestration of these remodeled organelles in viral factories.</text>
</comment>
<comment type="subcellular location">
    <subcellularLocation>
        <location evidence="1">Host cytoplasm</location>
    </subcellularLocation>
    <text evidence="1">Found in spherical cytoplasmic structures, called virus factories, that appear early after infection and are the site of viral replication and packaging.</text>
</comment>
<comment type="PTM">
    <text evidence="1">O-glycosylated.</text>
</comment>
<comment type="PTM">
    <text evidence="1">Hyperphosphorylated on serine residues, when in dimeric form. Phosphorylation by host CK1 is required for the hyperphosphorylation of NSP5 dimer.</text>
</comment>
<comment type="similarity">
    <text evidence="1">Belongs to the rotavirus NSP5 family.</text>
</comment>
<reference key="1">
    <citation type="journal article" date="2008" name="J. Virol.">
        <title>Group A human rotavirus genomics: evidence that gene constellations are influenced by viral protein interactions.</title>
        <authorList>
            <person name="Heiman E.M."/>
            <person name="McDonald S.M."/>
            <person name="Barro M."/>
            <person name="Taraporewala Z.F."/>
            <person name="Bar-Magen T."/>
            <person name="Patton J.T."/>
        </authorList>
    </citation>
    <scope>NUCLEOTIDE SEQUENCE [GENOMIC RNA]</scope>
</reference>
<protein>
    <recommendedName>
        <fullName evidence="1">Non-structural protein 5</fullName>
        <shortName evidence="1">NSP5</shortName>
    </recommendedName>
    <alternativeName>
        <fullName evidence="1">NS26</fullName>
    </alternativeName>
</protein>
<name>NSP5_ROTWI</name>
<evidence type="ECO:0000255" key="1">
    <source>
        <dbReference type="HAMAP-Rule" id="MF_04092"/>
    </source>
</evidence>
<evidence type="ECO:0000256" key="2">
    <source>
        <dbReference type="SAM" id="MobiDB-lite"/>
    </source>
</evidence>
<keyword id="KW-0325">Glycoprotein</keyword>
<keyword id="KW-1035">Host cytoplasm</keyword>
<keyword id="KW-0460">Magnesium</keyword>
<keyword id="KW-0479">Metal-binding</keyword>
<keyword id="KW-0547">Nucleotide-binding</keyword>
<keyword id="KW-0597">Phosphoprotein</keyword>
<keyword id="KW-0694">RNA-binding</keyword>
<dbReference type="EMBL" id="EF672625">
    <property type="protein sequence ID" value="ABV53306.1"/>
    <property type="molecule type" value="Genomic_RNA"/>
</dbReference>
<dbReference type="SMR" id="B3SRY1"/>
<dbReference type="Proteomes" id="UP000006580">
    <property type="component" value="Genome"/>
</dbReference>
<dbReference type="GO" id="GO:0030430">
    <property type="term" value="C:host cell cytoplasm"/>
    <property type="evidence" value="ECO:0007669"/>
    <property type="project" value="UniProtKB-SubCell"/>
</dbReference>
<dbReference type="GO" id="GO:0016887">
    <property type="term" value="F:ATP hydrolysis activity"/>
    <property type="evidence" value="ECO:0007669"/>
    <property type="project" value="UniProtKB-UniRule"/>
</dbReference>
<dbReference type="GO" id="GO:0000287">
    <property type="term" value="F:magnesium ion binding"/>
    <property type="evidence" value="ECO:0007669"/>
    <property type="project" value="UniProtKB-UniRule"/>
</dbReference>
<dbReference type="GO" id="GO:0000166">
    <property type="term" value="F:nucleotide binding"/>
    <property type="evidence" value="ECO:0007669"/>
    <property type="project" value="UniProtKB-UniRule"/>
</dbReference>
<dbReference type="GO" id="GO:0003723">
    <property type="term" value="F:RNA binding"/>
    <property type="evidence" value="ECO:0007669"/>
    <property type="project" value="UniProtKB-UniRule"/>
</dbReference>
<dbReference type="GO" id="GO:0019079">
    <property type="term" value="P:viral genome replication"/>
    <property type="evidence" value="ECO:0007669"/>
    <property type="project" value="UniProtKB-UniRule"/>
</dbReference>
<dbReference type="HAMAP" id="MF_04092">
    <property type="entry name" value="ROTA_NSP5"/>
    <property type="match status" value="1"/>
</dbReference>
<dbReference type="InterPro" id="IPR002512">
    <property type="entry name" value="Rotavirus_A/C_NSP5"/>
</dbReference>
<dbReference type="Pfam" id="PF01525">
    <property type="entry name" value="Rota_NS26"/>
    <property type="match status" value="2"/>
</dbReference>
<dbReference type="PIRSF" id="PIRSF004006">
    <property type="entry name" value="Rota_NS26"/>
    <property type="match status" value="1"/>
</dbReference>
<organism>
    <name type="scientific">Rotavirus A (isolate RVA/Human/United States/WI61/1983/G9P1A[8])</name>
    <name type="common">RV-A</name>
    <dbReference type="NCBI Taxonomy" id="578830"/>
    <lineage>
        <taxon>Viruses</taxon>
        <taxon>Riboviria</taxon>
        <taxon>Orthornavirae</taxon>
        <taxon>Duplornaviricota</taxon>
        <taxon>Resentoviricetes</taxon>
        <taxon>Reovirales</taxon>
        <taxon>Sedoreoviridae</taxon>
        <taxon>Rotavirus</taxon>
        <taxon>Rotavirus A</taxon>
    </lineage>
</organism>